<evidence type="ECO:0000255" key="1">
    <source>
        <dbReference type="HAMAP-Rule" id="MF_00693"/>
    </source>
</evidence>
<comment type="subcellular location">
    <subcellularLocation>
        <location evidence="1">Cytoplasm</location>
    </subcellularLocation>
</comment>
<comment type="similarity">
    <text evidence="1">Belongs to the TACO1 family.</text>
</comment>
<sequence>MSGHSKWATIKRKKAVTDQKRGSLFTKLVKEITIAAKMGGGDPAGNPRLRLAIDTARDNSMPMDNIQRAIKKGTGELEGVTWDEITYEGYGPAGIALIIETATDNRNRTVADIRHIMSRNNGSLGESGSVAWMFQRKGTLDVPRSAAGEDQLMELLLEAGLEDLGSDDENYFTVITDVKDLERVKKALDDAAIMYENAKIDLIPENYIELEAEDARKVIKLIDAFENNDDVQAVYTNMEISESAMSSLNE</sequence>
<proteinExistence type="inferred from homology"/>
<organism>
    <name type="scientific">Pelodictyon phaeoclathratiforme (strain DSM 5477 / BU-1)</name>
    <dbReference type="NCBI Taxonomy" id="324925"/>
    <lineage>
        <taxon>Bacteria</taxon>
        <taxon>Pseudomonadati</taxon>
        <taxon>Chlorobiota</taxon>
        <taxon>Chlorobiia</taxon>
        <taxon>Chlorobiales</taxon>
        <taxon>Chlorobiaceae</taxon>
        <taxon>Chlorobium/Pelodictyon group</taxon>
        <taxon>Pelodictyon</taxon>
    </lineage>
</organism>
<protein>
    <recommendedName>
        <fullName evidence="1">Probable transcriptional regulatory protein Ppha_0657</fullName>
    </recommendedName>
</protein>
<accession>B4SDW5</accession>
<gene>
    <name type="ordered locus">Ppha_0657</name>
</gene>
<keyword id="KW-0963">Cytoplasm</keyword>
<keyword id="KW-0238">DNA-binding</keyword>
<keyword id="KW-1185">Reference proteome</keyword>
<keyword id="KW-0804">Transcription</keyword>
<keyword id="KW-0805">Transcription regulation</keyword>
<feature type="chain" id="PRO_1000132226" description="Probable transcriptional regulatory protein Ppha_0657">
    <location>
        <begin position="1"/>
        <end position="250"/>
    </location>
</feature>
<name>Y657_PELPB</name>
<dbReference type="EMBL" id="CP001110">
    <property type="protein sequence ID" value="ACF42956.1"/>
    <property type="molecule type" value="Genomic_DNA"/>
</dbReference>
<dbReference type="RefSeq" id="WP_012507451.1">
    <property type="nucleotide sequence ID" value="NC_011060.1"/>
</dbReference>
<dbReference type="SMR" id="B4SDW5"/>
<dbReference type="STRING" id="324925.Ppha_0657"/>
<dbReference type="KEGG" id="pph:Ppha_0657"/>
<dbReference type="eggNOG" id="COG0217">
    <property type="taxonomic scope" value="Bacteria"/>
</dbReference>
<dbReference type="HOGENOM" id="CLU_062974_2_2_10"/>
<dbReference type="OrthoDB" id="9781053at2"/>
<dbReference type="Proteomes" id="UP000002724">
    <property type="component" value="Chromosome"/>
</dbReference>
<dbReference type="GO" id="GO:0005829">
    <property type="term" value="C:cytosol"/>
    <property type="evidence" value="ECO:0007669"/>
    <property type="project" value="TreeGrafter"/>
</dbReference>
<dbReference type="GO" id="GO:0003677">
    <property type="term" value="F:DNA binding"/>
    <property type="evidence" value="ECO:0007669"/>
    <property type="project" value="UniProtKB-UniRule"/>
</dbReference>
<dbReference type="GO" id="GO:0006355">
    <property type="term" value="P:regulation of DNA-templated transcription"/>
    <property type="evidence" value="ECO:0007669"/>
    <property type="project" value="UniProtKB-UniRule"/>
</dbReference>
<dbReference type="FunFam" id="1.10.10.200:FF:000002">
    <property type="entry name" value="Probable transcriptional regulatory protein CLM62_37755"/>
    <property type="match status" value="1"/>
</dbReference>
<dbReference type="Gene3D" id="1.10.10.200">
    <property type="match status" value="1"/>
</dbReference>
<dbReference type="Gene3D" id="3.30.70.980">
    <property type="match status" value="2"/>
</dbReference>
<dbReference type="HAMAP" id="MF_00693">
    <property type="entry name" value="Transcrip_reg_TACO1"/>
    <property type="match status" value="1"/>
</dbReference>
<dbReference type="InterPro" id="IPR017856">
    <property type="entry name" value="Integrase-like_N"/>
</dbReference>
<dbReference type="InterPro" id="IPR048300">
    <property type="entry name" value="TACO1_YebC-like_2nd/3rd_dom"/>
</dbReference>
<dbReference type="InterPro" id="IPR049083">
    <property type="entry name" value="TACO1_YebC_N"/>
</dbReference>
<dbReference type="InterPro" id="IPR002876">
    <property type="entry name" value="Transcrip_reg_TACO1-like"/>
</dbReference>
<dbReference type="InterPro" id="IPR026564">
    <property type="entry name" value="Transcrip_reg_TACO1-like_dom3"/>
</dbReference>
<dbReference type="InterPro" id="IPR029072">
    <property type="entry name" value="YebC-like"/>
</dbReference>
<dbReference type="NCBIfam" id="NF001030">
    <property type="entry name" value="PRK00110.1"/>
    <property type="match status" value="1"/>
</dbReference>
<dbReference type="NCBIfam" id="NF009044">
    <property type="entry name" value="PRK12378.1"/>
    <property type="match status" value="1"/>
</dbReference>
<dbReference type="NCBIfam" id="TIGR01033">
    <property type="entry name" value="YebC/PmpR family DNA-binding transcriptional regulator"/>
    <property type="match status" value="1"/>
</dbReference>
<dbReference type="PANTHER" id="PTHR12532:SF6">
    <property type="entry name" value="TRANSCRIPTIONAL REGULATORY PROTEIN YEBC-RELATED"/>
    <property type="match status" value="1"/>
</dbReference>
<dbReference type="PANTHER" id="PTHR12532">
    <property type="entry name" value="TRANSLATIONAL ACTIVATOR OF CYTOCHROME C OXIDASE 1"/>
    <property type="match status" value="1"/>
</dbReference>
<dbReference type="Pfam" id="PF20772">
    <property type="entry name" value="TACO1_YebC_N"/>
    <property type="match status" value="1"/>
</dbReference>
<dbReference type="Pfam" id="PF01709">
    <property type="entry name" value="Transcrip_reg"/>
    <property type="match status" value="1"/>
</dbReference>
<dbReference type="SUPFAM" id="SSF75625">
    <property type="entry name" value="YebC-like"/>
    <property type="match status" value="1"/>
</dbReference>
<reference key="1">
    <citation type="submission" date="2008-06" db="EMBL/GenBank/DDBJ databases">
        <title>Complete sequence of Pelodictyon phaeoclathratiforme BU-1.</title>
        <authorList>
            <consortium name="US DOE Joint Genome Institute"/>
            <person name="Lucas S."/>
            <person name="Copeland A."/>
            <person name="Lapidus A."/>
            <person name="Glavina del Rio T."/>
            <person name="Dalin E."/>
            <person name="Tice H."/>
            <person name="Bruce D."/>
            <person name="Goodwin L."/>
            <person name="Pitluck S."/>
            <person name="Schmutz J."/>
            <person name="Larimer F."/>
            <person name="Land M."/>
            <person name="Hauser L."/>
            <person name="Kyrpides N."/>
            <person name="Mikhailova N."/>
            <person name="Liu Z."/>
            <person name="Li T."/>
            <person name="Zhao F."/>
            <person name="Overmann J."/>
            <person name="Bryant D.A."/>
            <person name="Richardson P."/>
        </authorList>
    </citation>
    <scope>NUCLEOTIDE SEQUENCE [LARGE SCALE GENOMIC DNA]</scope>
    <source>
        <strain>DSM 5477 / BU-1</strain>
    </source>
</reference>